<organism>
    <name type="scientific">Mycobacterium tuberculosis (strain CDC 1551 / Oshkosh)</name>
    <dbReference type="NCBI Taxonomy" id="83331"/>
    <lineage>
        <taxon>Bacteria</taxon>
        <taxon>Bacillati</taxon>
        <taxon>Actinomycetota</taxon>
        <taxon>Actinomycetes</taxon>
        <taxon>Mycobacteriales</taxon>
        <taxon>Mycobacteriaceae</taxon>
        <taxon>Mycobacterium</taxon>
        <taxon>Mycobacterium tuberculosis complex</taxon>
    </lineage>
</organism>
<protein>
    <recommendedName>
        <fullName>Uncharacterized NAD-dependent oxidoreductase MT0715</fullName>
        <ecNumber>1.-.-.-</ecNumber>
    </recommendedName>
</protein>
<evidence type="ECO:0000250" key="1"/>
<evidence type="ECO:0000255" key="2">
    <source>
        <dbReference type="PROSITE-ProRule" id="PRU10001"/>
    </source>
</evidence>
<evidence type="ECO:0000305" key="3"/>
<name>Y0687_MYCTO</name>
<reference key="1">
    <citation type="journal article" date="2002" name="J. Bacteriol.">
        <title>Whole-genome comparison of Mycobacterium tuberculosis clinical and laboratory strains.</title>
        <authorList>
            <person name="Fleischmann R.D."/>
            <person name="Alland D."/>
            <person name="Eisen J.A."/>
            <person name="Carpenter L."/>
            <person name="White O."/>
            <person name="Peterson J.D."/>
            <person name="DeBoy R.T."/>
            <person name="Dodson R.J."/>
            <person name="Gwinn M.L."/>
            <person name="Haft D.H."/>
            <person name="Hickey E.K."/>
            <person name="Kolonay J.F."/>
            <person name="Nelson W.C."/>
            <person name="Umayam L.A."/>
            <person name="Ermolaeva M.D."/>
            <person name="Salzberg S.L."/>
            <person name="Delcher A."/>
            <person name="Utterback T.R."/>
            <person name="Weidman J.F."/>
            <person name="Khouri H.M."/>
            <person name="Gill J."/>
            <person name="Mikula A."/>
            <person name="Bishai W."/>
            <person name="Jacobs W.R. Jr."/>
            <person name="Venter J.C."/>
            <person name="Fraser C.M."/>
        </authorList>
    </citation>
    <scope>NUCLEOTIDE SEQUENCE [LARGE SCALE GENOMIC DNA]</scope>
    <source>
        <strain>CDC 1551 / Oshkosh</strain>
    </source>
</reference>
<keyword id="KW-0520">NAD</keyword>
<keyword id="KW-0560">Oxidoreductase</keyword>
<keyword id="KW-1185">Reference proteome</keyword>
<dbReference type="EC" id="1.-.-.-"/>
<dbReference type="EMBL" id="AE000516">
    <property type="protein sequence ID" value="AAK44941.1"/>
    <property type="molecule type" value="Genomic_DNA"/>
</dbReference>
<dbReference type="PIR" id="B70640">
    <property type="entry name" value="B70640"/>
</dbReference>
<dbReference type="RefSeq" id="WP_003403468.1">
    <property type="nucleotide sequence ID" value="NZ_KK341227.1"/>
</dbReference>
<dbReference type="SMR" id="P9WGS6"/>
<dbReference type="KEGG" id="mtc:MT0715"/>
<dbReference type="PATRIC" id="fig|83331.31.peg.763"/>
<dbReference type="HOGENOM" id="CLU_010194_1_0_11"/>
<dbReference type="Proteomes" id="UP000001020">
    <property type="component" value="Chromosome"/>
</dbReference>
<dbReference type="GO" id="GO:0016491">
    <property type="term" value="F:oxidoreductase activity"/>
    <property type="evidence" value="ECO:0007669"/>
    <property type="project" value="UniProtKB-KW"/>
</dbReference>
<dbReference type="CDD" id="cd05233">
    <property type="entry name" value="SDR_c"/>
    <property type="match status" value="1"/>
</dbReference>
<dbReference type="FunFam" id="3.40.50.720:FF:000084">
    <property type="entry name" value="Short-chain dehydrogenase reductase"/>
    <property type="match status" value="1"/>
</dbReference>
<dbReference type="Gene3D" id="3.40.50.720">
    <property type="entry name" value="NAD(P)-binding Rossmann-like Domain"/>
    <property type="match status" value="1"/>
</dbReference>
<dbReference type="InterPro" id="IPR036291">
    <property type="entry name" value="NAD(P)-bd_dom_sf"/>
</dbReference>
<dbReference type="InterPro" id="IPR020904">
    <property type="entry name" value="Sc_DH/Rdtase_CS"/>
</dbReference>
<dbReference type="InterPro" id="IPR002347">
    <property type="entry name" value="SDR_fam"/>
</dbReference>
<dbReference type="InterPro" id="IPR023985">
    <property type="entry name" value="SDR_subfam_1"/>
</dbReference>
<dbReference type="NCBIfam" id="NF009467">
    <property type="entry name" value="PRK12826.1-3"/>
    <property type="match status" value="1"/>
</dbReference>
<dbReference type="NCBIfam" id="TIGR03971">
    <property type="entry name" value="SDR_subfam_1"/>
    <property type="match status" value="1"/>
</dbReference>
<dbReference type="PANTHER" id="PTHR24321">
    <property type="entry name" value="DEHYDROGENASES, SHORT CHAIN"/>
    <property type="match status" value="1"/>
</dbReference>
<dbReference type="PANTHER" id="PTHR24321:SF8">
    <property type="entry name" value="ESTRADIOL 17-BETA-DEHYDROGENASE 8-RELATED"/>
    <property type="match status" value="1"/>
</dbReference>
<dbReference type="Pfam" id="PF13561">
    <property type="entry name" value="adh_short_C2"/>
    <property type="match status" value="1"/>
</dbReference>
<dbReference type="PRINTS" id="PR00081">
    <property type="entry name" value="GDHRDH"/>
</dbReference>
<dbReference type="PRINTS" id="PR00080">
    <property type="entry name" value="SDRFAMILY"/>
</dbReference>
<dbReference type="SMART" id="SM00822">
    <property type="entry name" value="PKS_KR"/>
    <property type="match status" value="1"/>
</dbReference>
<dbReference type="SUPFAM" id="SSF51735">
    <property type="entry name" value="NAD(P)-binding Rossmann-fold domains"/>
    <property type="match status" value="1"/>
</dbReference>
<dbReference type="PROSITE" id="PS00061">
    <property type="entry name" value="ADH_SHORT"/>
    <property type="match status" value="1"/>
</dbReference>
<feature type="chain" id="PRO_0000428310" description="Uncharacterized NAD-dependent oxidoreductase MT0715">
    <location>
        <begin position="1"/>
        <end position="275"/>
    </location>
</feature>
<feature type="active site" description="Proton acceptor" evidence="2">
    <location>
        <position position="173"/>
    </location>
</feature>
<feature type="binding site" evidence="1">
    <location>
        <begin position="20"/>
        <end position="22"/>
    </location>
    <ligand>
        <name>NAD(+)</name>
        <dbReference type="ChEBI" id="CHEBI:57540"/>
    </ligand>
</feature>
<feature type="binding site" evidence="1">
    <location>
        <begin position="41"/>
        <end position="42"/>
    </location>
    <ligand>
        <name>NAD(+)</name>
        <dbReference type="ChEBI" id="CHEBI:57540"/>
    </ligand>
</feature>
<feature type="binding site" evidence="1">
    <location>
        <begin position="80"/>
        <end position="81"/>
    </location>
    <ligand>
        <name>NAD(+)</name>
        <dbReference type="ChEBI" id="CHEBI:57540"/>
    </ligand>
</feature>
<feature type="binding site" evidence="1">
    <location>
        <position position="107"/>
    </location>
    <ligand>
        <name>NAD(+)</name>
        <dbReference type="ChEBI" id="CHEBI:57540"/>
    </ligand>
</feature>
<feature type="binding site" evidence="1">
    <location>
        <position position="160"/>
    </location>
    <ligand>
        <name>substrate</name>
    </ligand>
</feature>
<feature type="binding site" evidence="1">
    <location>
        <position position="177"/>
    </location>
    <ligand>
        <name>NAD(+)</name>
        <dbReference type="ChEBI" id="CHEBI:57540"/>
    </ligand>
</feature>
<feature type="binding site" evidence="1">
    <location>
        <begin position="206"/>
        <end position="208"/>
    </location>
    <ligand>
        <name>NAD(+)</name>
        <dbReference type="ChEBI" id="CHEBI:57540"/>
    </ligand>
</feature>
<gene>
    <name type="ordered locus">MT0715</name>
</gene>
<sequence>MSARGGSLHGRVAFVTGAARAQGRSHAVRLAREGADIVALDICAPVSGSVTYPPATSEDLGETVRAVEAEGRKVLAREVDIRDDAELRRLVADGVEQFGRLDIVVANAGVLGWGRLWELTDEQWETVIGVNLTGTWRTLRATVPAMIDAGNGGSIVVVSSSAGLKATPGNGHYAASKHALVALTNTLAIELGEFGIRVNSIHPYSVDTPMIEPEAMIQTFAKHPGYVHSFPPMPLQPKGFMTPDEISDVVVWLAGDGSGALSGNQIPVDKGALKY</sequence>
<comment type="similarity">
    <text evidence="3">Belongs to the short-chain dehydrogenases/reductases (SDR) family.</text>
</comment>
<accession>P9WGS6</accession>
<accession>L0T4F2</accession>
<accession>P95033</accession>
<accession>Q7D9F4</accession>
<proteinExistence type="inferred from homology"/>